<reference key="1">
    <citation type="journal article" date="2006" name="Nature">
        <title>Insights from the genome of the biotrophic fungal plant pathogen Ustilago maydis.</title>
        <authorList>
            <person name="Kaemper J."/>
            <person name="Kahmann R."/>
            <person name="Boelker M."/>
            <person name="Ma L.-J."/>
            <person name="Brefort T."/>
            <person name="Saville B.J."/>
            <person name="Banuett F."/>
            <person name="Kronstad J.W."/>
            <person name="Gold S.E."/>
            <person name="Mueller O."/>
            <person name="Perlin M.H."/>
            <person name="Woesten H.A.B."/>
            <person name="de Vries R."/>
            <person name="Ruiz-Herrera J."/>
            <person name="Reynaga-Pena C.G."/>
            <person name="Snetselaar K."/>
            <person name="McCann M."/>
            <person name="Perez-Martin J."/>
            <person name="Feldbruegge M."/>
            <person name="Basse C.W."/>
            <person name="Steinberg G."/>
            <person name="Ibeas J.I."/>
            <person name="Holloman W."/>
            <person name="Guzman P."/>
            <person name="Farman M.L."/>
            <person name="Stajich J.E."/>
            <person name="Sentandreu R."/>
            <person name="Gonzalez-Prieto J.M."/>
            <person name="Kennell J.C."/>
            <person name="Molina L."/>
            <person name="Schirawski J."/>
            <person name="Mendoza-Mendoza A."/>
            <person name="Greilinger D."/>
            <person name="Muench K."/>
            <person name="Roessel N."/>
            <person name="Scherer M."/>
            <person name="Vranes M."/>
            <person name="Ladendorf O."/>
            <person name="Vincon V."/>
            <person name="Fuchs U."/>
            <person name="Sandrock B."/>
            <person name="Meng S."/>
            <person name="Ho E.C.H."/>
            <person name="Cahill M.J."/>
            <person name="Boyce K.J."/>
            <person name="Klose J."/>
            <person name="Klosterman S.J."/>
            <person name="Deelstra H.J."/>
            <person name="Ortiz-Castellanos L."/>
            <person name="Li W."/>
            <person name="Sanchez-Alonso P."/>
            <person name="Schreier P.H."/>
            <person name="Haeuser-Hahn I."/>
            <person name="Vaupel M."/>
            <person name="Koopmann E."/>
            <person name="Friedrich G."/>
            <person name="Voss H."/>
            <person name="Schlueter T."/>
            <person name="Margolis J."/>
            <person name="Platt D."/>
            <person name="Swimmer C."/>
            <person name="Gnirke A."/>
            <person name="Chen F."/>
            <person name="Vysotskaia V."/>
            <person name="Mannhaupt G."/>
            <person name="Gueldener U."/>
            <person name="Muensterkoetter M."/>
            <person name="Haase D."/>
            <person name="Oesterheld M."/>
            <person name="Mewes H.-W."/>
            <person name="Mauceli E.W."/>
            <person name="DeCaprio D."/>
            <person name="Wade C.M."/>
            <person name="Butler J."/>
            <person name="Young S.K."/>
            <person name="Jaffe D.B."/>
            <person name="Calvo S.E."/>
            <person name="Nusbaum C."/>
            <person name="Galagan J.E."/>
            <person name="Birren B.W."/>
        </authorList>
    </citation>
    <scope>NUCLEOTIDE SEQUENCE [LARGE SCALE GENOMIC DNA]</scope>
    <source>
        <strain>DSM 14603 / FGSC 9021 / UM521</strain>
    </source>
</reference>
<reference key="2">
    <citation type="submission" date="2014-09" db="EMBL/GenBank/DDBJ databases">
        <authorList>
            <person name="Gueldener U."/>
            <person name="Muensterkoetter M."/>
            <person name="Walter M.C."/>
            <person name="Mannhaupt G."/>
            <person name="Kahmann R."/>
        </authorList>
    </citation>
    <scope>GENOME REANNOTATION</scope>
    <source>
        <strain>DSM 14603 / FGSC 9021 / UM521</strain>
    </source>
</reference>
<gene>
    <name type="ORF">UMAG_10076</name>
</gene>
<proteinExistence type="inferred from homology"/>
<feature type="signal peptide" evidence="1">
    <location>
        <begin position="1"/>
        <end position="23"/>
    </location>
</feature>
<feature type="chain" id="PRO_0000423943" description="Putative uncharacterized protein">
    <location>
        <begin position="24"/>
        <end position="162"/>
    </location>
</feature>
<protein>
    <recommendedName>
        <fullName>Putative uncharacterized protein</fullName>
    </recommendedName>
</protein>
<sequence>MLSLKSPAVLLSMVILVPLFALAVKQPYEYDFFMWNGAQEEYEKAHGHIPFEPAHVGADDFDKRIPEFKNKLLETAVVTGKLKGAIKIGVRGSRAQGNRAIWFTTIVHPEDSVGKEMDLQHELALILWRQEAYRKSLLWIDMVPIRGVHWGLQDLNTVLRHF</sequence>
<evidence type="ECO:0000255" key="1"/>
<name>YU076_MYCMD</name>
<accession>P0CT27</accession>
<accession>A0A0D1E5P8</accession>
<accession>Q4PCD5</accession>
<keyword id="KW-1185">Reference proteome</keyword>
<keyword id="KW-0732">Signal</keyword>
<organism>
    <name type="scientific">Mycosarcoma maydis</name>
    <name type="common">Corn smut fungus</name>
    <name type="synonym">Ustilago maydis</name>
    <dbReference type="NCBI Taxonomy" id="5270"/>
    <lineage>
        <taxon>Eukaryota</taxon>
        <taxon>Fungi</taxon>
        <taxon>Dikarya</taxon>
        <taxon>Basidiomycota</taxon>
        <taxon>Ustilaginomycotina</taxon>
        <taxon>Ustilaginomycetes</taxon>
        <taxon>Ustilaginales</taxon>
        <taxon>Ustilaginaceae</taxon>
        <taxon>Mycosarcoma</taxon>
    </lineage>
</organism>
<dbReference type="EMBL" id="CM003144">
    <property type="protein sequence ID" value="KIS69700.1"/>
    <property type="molecule type" value="Genomic_DNA"/>
</dbReference>
<dbReference type="RefSeq" id="XP_011388803.1">
    <property type="nucleotide sequence ID" value="XM_011390501.1"/>
</dbReference>
<dbReference type="EnsemblFungi" id="KIS69700">
    <property type="protein sequence ID" value="KIS69700"/>
    <property type="gene ID" value="UMAG_10076"/>
</dbReference>
<dbReference type="GeneID" id="23566150"/>
<dbReference type="KEGG" id="uma:UMAG_10076"/>
<dbReference type="VEuPathDB" id="FungiDB:UMAG_10076"/>
<dbReference type="eggNOG" id="KOG4146">
    <property type="taxonomic scope" value="Eukaryota"/>
</dbReference>
<dbReference type="InParanoid" id="P0CT27"/>
<dbReference type="OrthoDB" id="10427998at2759"/>
<dbReference type="Proteomes" id="UP000000561">
    <property type="component" value="Chromosome 5"/>
</dbReference>